<comment type="developmental stage">
    <text>Expressed in the second stage of root nodule formation.</text>
</comment>
<comment type="miscellaneous">
    <text>Contains 4 cysteines arranged in two pairs in such a way that they might be capable of binding a metal ion.</text>
</comment>
<evidence type="ECO:0000255" key="1"/>
<protein>
    <recommendedName>
        <fullName>Nodulin-3</fullName>
        <shortName>N-3</shortName>
    </recommendedName>
</protein>
<name>NO3_PEA</name>
<feature type="signal peptide" evidence="1">
    <location>
        <begin position="1"/>
        <end position="24"/>
    </location>
</feature>
<feature type="chain" id="PRO_0000019794" description="Nodulin-3">
    <location>
        <begin position="25"/>
        <end position="69"/>
    </location>
</feature>
<keyword id="KW-0479">Metal-binding</keyword>
<keyword id="KW-0536">Nodulation</keyword>
<keyword id="KW-0732">Signal</keyword>
<organism>
    <name type="scientific">Pisum sativum</name>
    <name type="common">Garden pea</name>
    <name type="synonym">Lathyrus oleraceus</name>
    <dbReference type="NCBI Taxonomy" id="3888"/>
    <lineage>
        <taxon>Eukaryota</taxon>
        <taxon>Viridiplantae</taxon>
        <taxon>Streptophyta</taxon>
        <taxon>Embryophyta</taxon>
        <taxon>Tracheophyta</taxon>
        <taxon>Spermatophyta</taxon>
        <taxon>Magnoliopsida</taxon>
        <taxon>eudicotyledons</taxon>
        <taxon>Gunneridae</taxon>
        <taxon>Pentapetalae</taxon>
        <taxon>rosids</taxon>
        <taxon>fabids</taxon>
        <taxon>Fabales</taxon>
        <taxon>Fabaceae</taxon>
        <taxon>Papilionoideae</taxon>
        <taxon>50 kb inversion clade</taxon>
        <taxon>NPAAA clade</taxon>
        <taxon>Hologalegina</taxon>
        <taxon>IRL clade</taxon>
        <taxon>Fabeae</taxon>
        <taxon>Pisum</taxon>
    </lineage>
</organism>
<reference key="1">
    <citation type="journal article" date="1990" name="Plant Cell">
        <title>Sequential induction of nodulin gene expression in the developing pea nodule.</title>
        <authorList>
            <person name="Scheres B."/>
            <person name="van Engelen F."/>
            <person name="van der Knaap E."/>
            <person name="van de Wiel C."/>
            <person name="van Kammen A."/>
            <person name="Bisseling T."/>
        </authorList>
    </citation>
    <scope>NUCLEOTIDE SEQUENCE [MRNA]</scope>
    <source>
        <strain>cv. Sparkle</strain>
        <tissue>Root nodule</tissue>
    </source>
</reference>
<dbReference type="EMBL" id="S45142">
    <property type="protein sequence ID" value="AAB23537.1"/>
    <property type="molecule type" value="mRNA"/>
</dbReference>
<dbReference type="PIR" id="JQ1085">
    <property type="entry name" value="JQ1085"/>
</dbReference>
<dbReference type="GO" id="GO:0046872">
    <property type="term" value="F:metal ion binding"/>
    <property type="evidence" value="ECO:0007669"/>
    <property type="project" value="UniProtKB-KW"/>
</dbReference>
<dbReference type="GO" id="GO:0009877">
    <property type="term" value="P:nodulation"/>
    <property type="evidence" value="ECO:0007669"/>
    <property type="project" value="UniProtKB-KW"/>
</dbReference>
<dbReference type="InterPro" id="IPR009810">
    <property type="entry name" value="Nodulin_late_dom"/>
</dbReference>
<dbReference type="Pfam" id="PF07127">
    <property type="entry name" value="Nodulin_late"/>
    <property type="match status" value="1"/>
</dbReference>
<proteinExistence type="evidence at transcript level"/>
<gene>
    <name type="primary">ENOD3</name>
</gene>
<accession>P25225</accession>
<sequence>MAKILKFVFAIILFFSLFLLSMEAEPLLPCETDGDCPLKPIIETTPMISLHYMCIDKECVLFREVLQTP</sequence>